<dbReference type="EC" id="6.1.1.1" evidence="1"/>
<dbReference type="EMBL" id="CP000705">
    <property type="protein sequence ID" value="ABQ82420.1"/>
    <property type="molecule type" value="Genomic_DNA"/>
</dbReference>
<dbReference type="RefSeq" id="WP_011953375.1">
    <property type="nucleotide sequence ID" value="NC_009513.1"/>
</dbReference>
<dbReference type="SMR" id="A5VHU6"/>
<dbReference type="STRING" id="557436.Lreu_0148"/>
<dbReference type="KEGG" id="lre:Lreu_0148"/>
<dbReference type="eggNOG" id="COG0162">
    <property type="taxonomic scope" value="Bacteria"/>
</dbReference>
<dbReference type="HOGENOM" id="CLU_024003_0_3_9"/>
<dbReference type="Proteomes" id="UP000001991">
    <property type="component" value="Chromosome"/>
</dbReference>
<dbReference type="GO" id="GO:0005829">
    <property type="term" value="C:cytosol"/>
    <property type="evidence" value="ECO:0007669"/>
    <property type="project" value="TreeGrafter"/>
</dbReference>
<dbReference type="GO" id="GO:0005524">
    <property type="term" value="F:ATP binding"/>
    <property type="evidence" value="ECO:0007669"/>
    <property type="project" value="UniProtKB-UniRule"/>
</dbReference>
<dbReference type="GO" id="GO:0003723">
    <property type="term" value="F:RNA binding"/>
    <property type="evidence" value="ECO:0007669"/>
    <property type="project" value="UniProtKB-KW"/>
</dbReference>
<dbReference type="GO" id="GO:0004831">
    <property type="term" value="F:tyrosine-tRNA ligase activity"/>
    <property type="evidence" value="ECO:0007669"/>
    <property type="project" value="UniProtKB-UniRule"/>
</dbReference>
<dbReference type="GO" id="GO:0006437">
    <property type="term" value="P:tyrosyl-tRNA aminoacylation"/>
    <property type="evidence" value="ECO:0007669"/>
    <property type="project" value="UniProtKB-UniRule"/>
</dbReference>
<dbReference type="CDD" id="cd00165">
    <property type="entry name" value="S4"/>
    <property type="match status" value="1"/>
</dbReference>
<dbReference type="CDD" id="cd00805">
    <property type="entry name" value="TyrRS_core"/>
    <property type="match status" value="1"/>
</dbReference>
<dbReference type="FunFam" id="1.10.240.10:FF:000001">
    <property type="entry name" value="Tyrosine--tRNA ligase"/>
    <property type="match status" value="1"/>
</dbReference>
<dbReference type="FunFam" id="3.40.50.620:FF:000008">
    <property type="entry name" value="Tyrosine--tRNA ligase"/>
    <property type="match status" value="1"/>
</dbReference>
<dbReference type="Gene3D" id="3.40.50.620">
    <property type="entry name" value="HUPs"/>
    <property type="match status" value="1"/>
</dbReference>
<dbReference type="Gene3D" id="3.10.290.10">
    <property type="entry name" value="RNA-binding S4 domain"/>
    <property type="match status" value="1"/>
</dbReference>
<dbReference type="Gene3D" id="1.10.240.10">
    <property type="entry name" value="Tyrosyl-Transfer RNA Synthetase"/>
    <property type="match status" value="1"/>
</dbReference>
<dbReference type="HAMAP" id="MF_02006">
    <property type="entry name" value="Tyr_tRNA_synth_type1"/>
    <property type="match status" value="1"/>
</dbReference>
<dbReference type="InterPro" id="IPR001412">
    <property type="entry name" value="aa-tRNA-synth_I_CS"/>
</dbReference>
<dbReference type="InterPro" id="IPR002305">
    <property type="entry name" value="aa-tRNA-synth_Ic"/>
</dbReference>
<dbReference type="InterPro" id="IPR014729">
    <property type="entry name" value="Rossmann-like_a/b/a_fold"/>
</dbReference>
<dbReference type="InterPro" id="IPR002942">
    <property type="entry name" value="S4_RNA-bd"/>
</dbReference>
<dbReference type="InterPro" id="IPR036986">
    <property type="entry name" value="S4_RNA-bd_sf"/>
</dbReference>
<dbReference type="InterPro" id="IPR054608">
    <property type="entry name" value="SYY-like_C"/>
</dbReference>
<dbReference type="InterPro" id="IPR002307">
    <property type="entry name" value="Tyr-tRNA-ligase"/>
</dbReference>
<dbReference type="InterPro" id="IPR024088">
    <property type="entry name" value="Tyr-tRNA-ligase_bac-type"/>
</dbReference>
<dbReference type="InterPro" id="IPR024107">
    <property type="entry name" value="Tyr-tRNA-ligase_bac_1"/>
</dbReference>
<dbReference type="NCBIfam" id="TIGR00234">
    <property type="entry name" value="tyrS"/>
    <property type="match status" value="1"/>
</dbReference>
<dbReference type="PANTHER" id="PTHR11766:SF0">
    <property type="entry name" value="TYROSINE--TRNA LIGASE, MITOCHONDRIAL"/>
    <property type="match status" value="1"/>
</dbReference>
<dbReference type="PANTHER" id="PTHR11766">
    <property type="entry name" value="TYROSYL-TRNA SYNTHETASE"/>
    <property type="match status" value="1"/>
</dbReference>
<dbReference type="Pfam" id="PF22421">
    <property type="entry name" value="SYY_C-terminal"/>
    <property type="match status" value="1"/>
</dbReference>
<dbReference type="Pfam" id="PF00579">
    <property type="entry name" value="tRNA-synt_1b"/>
    <property type="match status" value="1"/>
</dbReference>
<dbReference type="PRINTS" id="PR01040">
    <property type="entry name" value="TRNASYNTHTYR"/>
</dbReference>
<dbReference type="SMART" id="SM00363">
    <property type="entry name" value="S4"/>
    <property type="match status" value="1"/>
</dbReference>
<dbReference type="SUPFAM" id="SSF55174">
    <property type="entry name" value="Alpha-L RNA-binding motif"/>
    <property type="match status" value="1"/>
</dbReference>
<dbReference type="SUPFAM" id="SSF52374">
    <property type="entry name" value="Nucleotidylyl transferase"/>
    <property type="match status" value="1"/>
</dbReference>
<dbReference type="PROSITE" id="PS00178">
    <property type="entry name" value="AA_TRNA_LIGASE_I"/>
    <property type="match status" value="1"/>
</dbReference>
<dbReference type="PROSITE" id="PS50889">
    <property type="entry name" value="S4"/>
    <property type="match status" value="1"/>
</dbReference>
<protein>
    <recommendedName>
        <fullName evidence="1">Tyrosine--tRNA ligase</fullName>
        <ecNumber evidence="1">6.1.1.1</ecNumber>
    </recommendedName>
    <alternativeName>
        <fullName evidence="1">Tyrosyl-tRNA synthetase</fullName>
        <shortName evidence="1">TyrRS</shortName>
    </alternativeName>
</protein>
<feature type="chain" id="PRO_1000189302" description="Tyrosine--tRNA ligase">
    <location>
        <begin position="1"/>
        <end position="416"/>
    </location>
</feature>
<feature type="domain" description="S4 RNA-binding" evidence="1">
    <location>
        <begin position="349"/>
        <end position="416"/>
    </location>
</feature>
<feature type="short sequence motif" description="'HIGH' region">
    <location>
        <begin position="39"/>
        <end position="48"/>
    </location>
</feature>
<feature type="short sequence motif" description="'KMSKS' region">
    <location>
        <begin position="227"/>
        <end position="231"/>
    </location>
</feature>
<feature type="binding site" evidence="1">
    <location>
        <position position="34"/>
    </location>
    <ligand>
        <name>L-tyrosine</name>
        <dbReference type="ChEBI" id="CHEBI:58315"/>
    </ligand>
</feature>
<feature type="binding site" evidence="1">
    <location>
        <position position="165"/>
    </location>
    <ligand>
        <name>L-tyrosine</name>
        <dbReference type="ChEBI" id="CHEBI:58315"/>
    </ligand>
</feature>
<feature type="binding site" evidence="1">
    <location>
        <position position="169"/>
    </location>
    <ligand>
        <name>L-tyrosine</name>
        <dbReference type="ChEBI" id="CHEBI:58315"/>
    </ligand>
</feature>
<feature type="binding site" evidence="1">
    <location>
        <position position="230"/>
    </location>
    <ligand>
        <name>ATP</name>
        <dbReference type="ChEBI" id="CHEBI:30616"/>
    </ligand>
</feature>
<gene>
    <name evidence="1" type="primary">tyrS</name>
    <name type="ordered locus">Lreu_0148</name>
</gene>
<comment type="function">
    <text evidence="1">Catalyzes the attachment of tyrosine to tRNA(Tyr) in a two-step reaction: tyrosine is first activated by ATP to form Tyr-AMP and then transferred to the acceptor end of tRNA(Tyr).</text>
</comment>
<comment type="catalytic activity">
    <reaction evidence="1">
        <text>tRNA(Tyr) + L-tyrosine + ATP = L-tyrosyl-tRNA(Tyr) + AMP + diphosphate + H(+)</text>
        <dbReference type="Rhea" id="RHEA:10220"/>
        <dbReference type="Rhea" id="RHEA-COMP:9706"/>
        <dbReference type="Rhea" id="RHEA-COMP:9707"/>
        <dbReference type="ChEBI" id="CHEBI:15378"/>
        <dbReference type="ChEBI" id="CHEBI:30616"/>
        <dbReference type="ChEBI" id="CHEBI:33019"/>
        <dbReference type="ChEBI" id="CHEBI:58315"/>
        <dbReference type="ChEBI" id="CHEBI:78442"/>
        <dbReference type="ChEBI" id="CHEBI:78536"/>
        <dbReference type="ChEBI" id="CHEBI:456215"/>
        <dbReference type="EC" id="6.1.1.1"/>
    </reaction>
</comment>
<comment type="subunit">
    <text evidence="1">Homodimer.</text>
</comment>
<comment type="subcellular location">
    <subcellularLocation>
        <location evidence="1">Cytoplasm</location>
    </subcellularLocation>
</comment>
<comment type="similarity">
    <text evidence="1">Belongs to the class-I aminoacyl-tRNA synthetase family. TyrS type 1 subfamily.</text>
</comment>
<reference key="1">
    <citation type="journal article" date="2011" name="PLoS Genet.">
        <title>The evolution of host specialization in the vertebrate gut symbiont Lactobacillus reuteri.</title>
        <authorList>
            <person name="Frese S.A."/>
            <person name="Benson A.K."/>
            <person name="Tannock G.W."/>
            <person name="Loach D.M."/>
            <person name="Kim J."/>
            <person name="Zhang M."/>
            <person name="Oh P.L."/>
            <person name="Heng N.C."/>
            <person name="Patil P.B."/>
            <person name="Juge N."/>
            <person name="Mackenzie D.A."/>
            <person name="Pearson B.M."/>
            <person name="Lapidus A."/>
            <person name="Dalin E."/>
            <person name="Tice H."/>
            <person name="Goltsman E."/>
            <person name="Land M."/>
            <person name="Hauser L."/>
            <person name="Ivanova N."/>
            <person name="Kyrpides N.C."/>
            <person name="Walter J."/>
        </authorList>
    </citation>
    <scope>NUCLEOTIDE SEQUENCE [LARGE SCALE GENOMIC DNA]</scope>
    <source>
        <strain>DSM 20016</strain>
    </source>
</reference>
<organism>
    <name type="scientific">Limosilactobacillus reuteri (strain DSM 20016)</name>
    <name type="common">Lactobacillus reuteri</name>
    <dbReference type="NCBI Taxonomy" id="557436"/>
    <lineage>
        <taxon>Bacteria</taxon>
        <taxon>Bacillati</taxon>
        <taxon>Bacillota</taxon>
        <taxon>Bacilli</taxon>
        <taxon>Lactobacillales</taxon>
        <taxon>Lactobacillaceae</taxon>
        <taxon>Limosilactobacillus</taxon>
    </lineage>
</organism>
<keyword id="KW-0030">Aminoacyl-tRNA synthetase</keyword>
<keyword id="KW-0067">ATP-binding</keyword>
<keyword id="KW-0963">Cytoplasm</keyword>
<keyword id="KW-0436">Ligase</keyword>
<keyword id="KW-0547">Nucleotide-binding</keyword>
<keyword id="KW-0648">Protein biosynthesis</keyword>
<keyword id="KW-1185">Reference proteome</keyword>
<keyword id="KW-0694">RNA-binding</keyword>
<proteinExistence type="inferred from homology"/>
<sequence length="416" mass="47217">MDILNELEWRGAINQVTDEEGLRKLTSEDKIALYCGTDPTGDSLHIGHLIPFMILKRFQLAGHHPVIIIGGGTGAIGDPSGRKSERQLQTMDQVHHNEEALTAQMKKLFGTENFTIVNNYEWLSKISLLDFLRDYGKLFNINTMLNKEVVASRLDAGISFTEFTYQILQSVDFLHLYRHNDVQLQIGGSDQWGNITAGIDLIHKVEGPDTKVYGLTIPLMLKADGTKFGKTAGGAIWLDPEKTSPYEFYQFWINQDDRDVIKYLKYFTFLSKEEIDDLAEKVEKEPWKREAQRRLAQEVTKFVHGQEAVEEAERISKALFSGDVADLSVAEIEQGFKNMPSVDVENKKENIIIWLTDNGIEPSRRQARQDVSSGAIRINGEKVDDVDAEIDPQAHFAGKFVIVRKGKKHYYLARVK</sequence>
<name>SYY_LIMRD</name>
<evidence type="ECO:0000255" key="1">
    <source>
        <dbReference type="HAMAP-Rule" id="MF_02006"/>
    </source>
</evidence>
<accession>A5VHU6</accession>